<protein>
    <recommendedName>
        <fullName evidence="1">Large ribosomal subunit protein uL6</fullName>
    </recommendedName>
    <alternativeName>
        <fullName evidence="2">50S ribosomal protein L6</fullName>
    </alternativeName>
</protein>
<evidence type="ECO:0000255" key="1">
    <source>
        <dbReference type="HAMAP-Rule" id="MF_01365"/>
    </source>
</evidence>
<evidence type="ECO:0000305" key="2"/>
<feature type="chain" id="PRO_1000143963" description="Large ribosomal subunit protein uL6">
    <location>
        <begin position="1"/>
        <end position="180"/>
    </location>
</feature>
<organism>
    <name type="scientific">Clostridium botulinum (strain Alaska E43 / Type E3)</name>
    <dbReference type="NCBI Taxonomy" id="508767"/>
    <lineage>
        <taxon>Bacteria</taxon>
        <taxon>Bacillati</taxon>
        <taxon>Bacillota</taxon>
        <taxon>Clostridia</taxon>
        <taxon>Eubacteriales</taxon>
        <taxon>Clostridiaceae</taxon>
        <taxon>Clostridium</taxon>
    </lineage>
</organism>
<dbReference type="EMBL" id="CP001078">
    <property type="protein sequence ID" value="ACD51801.1"/>
    <property type="molecule type" value="Genomic_DNA"/>
</dbReference>
<dbReference type="RefSeq" id="WP_003373975.1">
    <property type="nucleotide sequence ID" value="NC_010723.1"/>
</dbReference>
<dbReference type="SMR" id="B2UYC5"/>
<dbReference type="KEGG" id="cbt:CLH_0252"/>
<dbReference type="HOGENOM" id="CLU_065464_1_2_9"/>
<dbReference type="GO" id="GO:0022625">
    <property type="term" value="C:cytosolic large ribosomal subunit"/>
    <property type="evidence" value="ECO:0007669"/>
    <property type="project" value="TreeGrafter"/>
</dbReference>
<dbReference type="GO" id="GO:0019843">
    <property type="term" value="F:rRNA binding"/>
    <property type="evidence" value="ECO:0007669"/>
    <property type="project" value="UniProtKB-UniRule"/>
</dbReference>
<dbReference type="GO" id="GO:0003735">
    <property type="term" value="F:structural constituent of ribosome"/>
    <property type="evidence" value="ECO:0007669"/>
    <property type="project" value="InterPro"/>
</dbReference>
<dbReference type="GO" id="GO:0002181">
    <property type="term" value="P:cytoplasmic translation"/>
    <property type="evidence" value="ECO:0007669"/>
    <property type="project" value="TreeGrafter"/>
</dbReference>
<dbReference type="FunFam" id="3.90.930.12:FF:000001">
    <property type="entry name" value="50S ribosomal protein L6"/>
    <property type="match status" value="1"/>
</dbReference>
<dbReference type="FunFam" id="3.90.930.12:FF:000002">
    <property type="entry name" value="50S ribosomal protein L6"/>
    <property type="match status" value="1"/>
</dbReference>
<dbReference type="Gene3D" id="3.90.930.12">
    <property type="entry name" value="Ribosomal protein L6, alpha-beta domain"/>
    <property type="match status" value="2"/>
</dbReference>
<dbReference type="HAMAP" id="MF_01365_B">
    <property type="entry name" value="Ribosomal_uL6_B"/>
    <property type="match status" value="1"/>
</dbReference>
<dbReference type="InterPro" id="IPR000702">
    <property type="entry name" value="Ribosomal_uL6-like"/>
</dbReference>
<dbReference type="InterPro" id="IPR036789">
    <property type="entry name" value="Ribosomal_uL6-like_a/b-dom_sf"/>
</dbReference>
<dbReference type="InterPro" id="IPR020040">
    <property type="entry name" value="Ribosomal_uL6_a/b-dom"/>
</dbReference>
<dbReference type="InterPro" id="IPR019906">
    <property type="entry name" value="Ribosomal_uL6_bac-type"/>
</dbReference>
<dbReference type="InterPro" id="IPR002358">
    <property type="entry name" value="Ribosomal_uL6_CS"/>
</dbReference>
<dbReference type="NCBIfam" id="TIGR03654">
    <property type="entry name" value="L6_bact"/>
    <property type="match status" value="1"/>
</dbReference>
<dbReference type="PANTHER" id="PTHR11655">
    <property type="entry name" value="60S/50S RIBOSOMAL PROTEIN L6/L9"/>
    <property type="match status" value="1"/>
</dbReference>
<dbReference type="PANTHER" id="PTHR11655:SF14">
    <property type="entry name" value="LARGE RIBOSOMAL SUBUNIT PROTEIN UL6M"/>
    <property type="match status" value="1"/>
</dbReference>
<dbReference type="Pfam" id="PF00347">
    <property type="entry name" value="Ribosomal_L6"/>
    <property type="match status" value="2"/>
</dbReference>
<dbReference type="PIRSF" id="PIRSF002162">
    <property type="entry name" value="Ribosomal_L6"/>
    <property type="match status" value="1"/>
</dbReference>
<dbReference type="PRINTS" id="PR00059">
    <property type="entry name" value="RIBOSOMALL6"/>
</dbReference>
<dbReference type="SUPFAM" id="SSF56053">
    <property type="entry name" value="Ribosomal protein L6"/>
    <property type="match status" value="2"/>
</dbReference>
<dbReference type="PROSITE" id="PS00525">
    <property type="entry name" value="RIBOSOMAL_L6_1"/>
    <property type="match status" value="1"/>
</dbReference>
<comment type="function">
    <text evidence="1">This protein binds to the 23S rRNA, and is important in its secondary structure. It is located near the subunit interface in the base of the L7/L12 stalk, and near the tRNA binding site of the peptidyltransferase center.</text>
</comment>
<comment type="subunit">
    <text evidence="1">Part of the 50S ribosomal subunit.</text>
</comment>
<comment type="similarity">
    <text evidence="1">Belongs to the universal ribosomal protein uL6 family.</text>
</comment>
<proteinExistence type="inferred from homology"/>
<gene>
    <name evidence="1" type="primary">rplF</name>
    <name type="ordered locus">CLH_0252</name>
</gene>
<name>RL6_CLOBA</name>
<keyword id="KW-0687">Ribonucleoprotein</keyword>
<keyword id="KW-0689">Ribosomal protein</keyword>
<keyword id="KW-0694">RNA-binding</keyword>
<keyword id="KW-0699">rRNA-binding</keyword>
<sequence>MSRVGRLPIAVPAGITVTVTPDNVVTVKGPKGELVKTMHKDINIAVENNEVIVTRPSDQKAHRALHGLTRALINNMVIGVNEGYQKTLELVGVGYRAQLQGKKLVMNLGYSHPVEIEPIDGITFETPAATKVIVKGIDKEKVGAAAADIRKWRLPEPYKGKGIKFENEVIRRKEGKTGKK</sequence>
<reference key="1">
    <citation type="submission" date="2008-05" db="EMBL/GenBank/DDBJ databases">
        <title>Complete genome sequence of Clostridium botulinum E3 str. Alaska E43.</title>
        <authorList>
            <person name="Brinkac L.M."/>
            <person name="Brown J.L."/>
            <person name="Bruce D."/>
            <person name="Detter C."/>
            <person name="Munk C."/>
            <person name="Smith L.A."/>
            <person name="Smith T.J."/>
            <person name="Sutton G."/>
            <person name="Brettin T.S."/>
        </authorList>
    </citation>
    <scope>NUCLEOTIDE SEQUENCE [LARGE SCALE GENOMIC DNA]</scope>
    <source>
        <strain>Alaska E43 / Type E3</strain>
    </source>
</reference>
<accession>B2UYC5</accession>